<dbReference type="EMBL" id="AY812888">
    <property type="protein sequence ID" value="AAW24620.1"/>
    <property type="molecule type" value="mRNA"/>
</dbReference>
<dbReference type="SMR" id="Q5DHT6"/>
<dbReference type="OrthoDB" id="10267031at2759"/>
<dbReference type="GO" id="GO:0016282">
    <property type="term" value="C:eukaryotic 43S preinitiation complex"/>
    <property type="evidence" value="ECO:0007669"/>
    <property type="project" value="UniProtKB-UniRule"/>
</dbReference>
<dbReference type="GO" id="GO:0033290">
    <property type="term" value="C:eukaryotic 48S preinitiation complex"/>
    <property type="evidence" value="ECO:0007669"/>
    <property type="project" value="UniProtKB-UniRule"/>
</dbReference>
<dbReference type="GO" id="GO:0071541">
    <property type="term" value="C:eukaryotic translation initiation factor 3 complex, eIF3m"/>
    <property type="evidence" value="ECO:0007669"/>
    <property type="project" value="UniProtKB-UniRule"/>
</dbReference>
<dbReference type="GO" id="GO:0003743">
    <property type="term" value="F:translation initiation factor activity"/>
    <property type="evidence" value="ECO:0007669"/>
    <property type="project" value="UniProtKB-UniRule"/>
</dbReference>
<dbReference type="GO" id="GO:0001732">
    <property type="term" value="P:formation of cytoplasmic translation initiation complex"/>
    <property type="evidence" value="ECO:0007669"/>
    <property type="project" value="UniProtKB-UniRule"/>
</dbReference>
<dbReference type="HAMAP" id="MF_03012">
    <property type="entry name" value="eIF3m"/>
    <property type="match status" value="1"/>
</dbReference>
<dbReference type="InterPro" id="IPR045237">
    <property type="entry name" value="COPS7/eIF3m"/>
</dbReference>
<dbReference type="InterPro" id="IPR027528">
    <property type="entry name" value="eIF3m"/>
</dbReference>
<dbReference type="InterPro" id="IPR040750">
    <property type="entry name" value="eIF3m_C_helix"/>
</dbReference>
<dbReference type="InterPro" id="IPR000717">
    <property type="entry name" value="PCI_dom"/>
</dbReference>
<dbReference type="PANTHER" id="PTHR15350">
    <property type="entry name" value="COP9 SIGNALOSOME COMPLEX SUBUNIT 7/DENDRITIC CELL PROTEIN GA17"/>
    <property type="match status" value="1"/>
</dbReference>
<dbReference type="PANTHER" id="PTHR15350:SF2">
    <property type="entry name" value="EUKARYOTIC TRANSLATION INITIATION FACTOR 3 SUBUNIT M"/>
    <property type="match status" value="1"/>
</dbReference>
<dbReference type="Pfam" id="PF18005">
    <property type="entry name" value="eIF3m_C_helix"/>
    <property type="match status" value="1"/>
</dbReference>
<dbReference type="Pfam" id="PF01399">
    <property type="entry name" value="PCI"/>
    <property type="match status" value="1"/>
</dbReference>
<dbReference type="SMART" id="SM00088">
    <property type="entry name" value="PINT"/>
    <property type="match status" value="1"/>
</dbReference>
<dbReference type="PROSITE" id="PS50250">
    <property type="entry name" value="PCI"/>
    <property type="match status" value="1"/>
</dbReference>
<name>EIF3M_SCHJA</name>
<protein>
    <recommendedName>
        <fullName evidence="1">Eukaryotic translation initiation factor 3 subunit M</fullName>
        <shortName evidence="1">eIF3m</shortName>
    </recommendedName>
</protein>
<organism>
    <name type="scientific">Schistosoma japonicum</name>
    <name type="common">Blood fluke</name>
    <dbReference type="NCBI Taxonomy" id="6182"/>
    <lineage>
        <taxon>Eukaryota</taxon>
        <taxon>Metazoa</taxon>
        <taxon>Spiralia</taxon>
        <taxon>Lophotrochozoa</taxon>
        <taxon>Platyhelminthes</taxon>
        <taxon>Trematoda</taxon>
        <taxon>Digenea</taxon>
        <taxon>Strigeidida</taxon>
        <taxon>Schistosomatoidea</taxon>
        <taxon>Schistosomatidae</taxon>
        <taxon>Schistosoma</taxon>
    </lineage>
</organism>
<reference key="1">
    <citation type="journal article" date="2006" name="PLoS Pathog.">
        <title>New perspectives on host-parasite interplay by comparative transcriptomic and proteomic analyses of Schistosoma japonicum.</title>
        <authorList>
            <person name="Liu F."/>
            <person name="Lu J."/>
            <person name="Hu W."/>
            <person name="Wang S.-Y."/>
            <person name="Cui S.-J."/>
            <person name="Chi M."/>
            <person name="Yan Q."/>
            <person name="Wang X.-R."/>
            <person name="Song H.-D."/>
            <person name="Xu X.-N."/>
            <person name="Wang J.-J."/>
            <person name="Zhang X.-L."/>
            <person name="Zhang X."/>
            <person name="Wang Z.-Q."/>
            <person name="Xue C.-L."/>
            <person name="Brindley P.J."/>
            <person name="McManus D.P."/>
            <person name="Yang P.-Y."/>
            <person name="Feng Z."/>
            <person name="Chen Z."/>
            <person name="Han Z.-G."/>
        </authorList>
    </citation>
    <scope>NUCLEOTIDE SEQUENCE [LARGE SCALE MRNA]</scope>
</reference>
<gene>
    <name type="ORF">SJCHGC06559</name>
</gene>
<feature type="chain" id="PRO_0000366010" description="Eukaryotic translation initiation factor 3 subunit M">
    <location>
        <begin position="1"/>
        <end position="384"/>
    </location>
</feature>
<feature type="domain" description="PCI" evidence="2">
    <location>
        <begin position="184"/>
        <end position="346"/>
    </location>
</feature>
<sequence length="384" mass="43760">MSIAVFIDGTDAQQVTELKKFLKSYGAKVLDNTECSDANWPDELIKCIKFLNVCWKDESIAESDAKDVLTSVASMFIQLPPNKLIEAVPLFCEKLLDFSGDNIRRHKNKLFPLNLLFWGLNPKSHPRYEIFLTLIECAEKMGVLNEVITDPKKVASWLSECDCTVEECQKVWQKLYDAHIALGENRKAIEAMIYLLSTYNEVTAVNARQNAIKCIISVLQDPCLLSHDQLYALKPVQYLEGEPVHDFFKIFVSGDLNTFKNFLAKHPNFLSHNNLSEEACVHKLRLLTLMQLSENVNELSYHEAATQLGLKIEELEPFIIEAVRQRAVACKLDQVQKKILITGAFPRTFGRPQWINLHDTLVQWRSHLGTVQSSLSMMIQNESS</sequence>
<comment type="function">
    <text evidence="1">Component of the eukaryotic translation initiation factor 3 (eIF-3) complex, which is involved in protein synthesis of a specialized repertoire of mRNAs and, together with other initiation factors, stimulates binding of mRNA and methionyl-tRNAi to the 40S ribosome. The eIF-3 complex specifically targets and initiates translation of a subset of mRNAs involved in cell proliferation.</text>
</comment>
<comment type="subunit">
    <text evidence="1">Component of the eukaryotic translation initiation factor 3 (eIF-3) complex.</text>
</comment>
<comment type="subcellular location">
    <subcellularLocation>
        <location evidence="1">Cytoplasm</location>
    </subcellularLocation>
</comment>
<comment type="similarity">
    <text evidence="1">Belongs to the eIF-3 subunit M family.</text>
</comment>
<accession>Q5DHT6</accession>
<proteinExistence type="evidence at transcript level"/>
<evidence type="ECO:0000255" key="1">
    <source>
        <dbReference type="HAMAP-Rule" id="MF_03012"/>
    </source>
</evidence>
<evidence type="ECO:0000255" key="2">
    <source>
        <dbReference type="PROSITE-ProRule" id="PRU01185"/>
    </source>
</evidence>
<keyword id="KW-0963">Cytoplasm</keyword>
<keyword id="KW-0396">Initiation factor</keyword>
<keyword id="KW-0648">Protein biosynthesis</keyword>